<sequence length="220" mass="24797">MAAATGTRKKKTPRPGQWKLWLLYTAGFVPAVWTFYLGATGQLGADPVKTFEHLLGLWALRFLILTLLVTPIRDLTGITLLRYRRALGLLAFYYALMHFTTYMVLDQGLNLSAIITDIVRRPFITIGMISLALLVPLALTSNNWSIRKLGRRWSSLHKLVYIAIAGSAVHFLMSVKSWPAEPVIYAAIVAALLLWRLARPYLRTRKPALRPRGEAIALRK</sequence>
<gene>
    <name evidence="1" type="primary">msrQ</name>
    <name type="ordered locus">BCAN_B1010</name>
</gene>
<proteinExistence type="inferred from homology"/>
<reference key="1">
    <citation type="submission" date="2007-10" db="EMBL/GenBank/DDBJ databases">
        <title>Brucella canis ATCC 23365 whole genome shotgun sequencing project.</title>
        <authorList>
            <person name="Setubal J.C."/>
            <person name="Bowns C."/>
            <person name="Boyle S."/>
            <person name="Crasta O.R."/>
            <person name="Czar M.J."/>
            <person name="Dharmanolla C."/>
            <person name="Gillespie J.J."/>
            <person name="Kenyon R.W."/>
            <person name="Lu J."/>
            <person name="Mane S."/>
            <person name="Mohapatra S."/>
            <person name="Nagrani S."/>
            <person name="Purkayastha A."/>
            <person name="Rajasimha H.K."/>
            <person name="Shallom J.M."/>
            <person name="Shallom S."/>
            <person name="Shukla M."/>
            <person name="Snyder E.E."/>
            <person name="Sobral B.W."/>
            <person name="Wattam A.R."/>
            <person name="Will R."/>
            <person name="Williams K."/>
            <person name="Yoo H."/>
            <person name="Bruce D."/>
            <person name="Detter C."/>
            <person name="Munk C."/>
            <person name="Brettin T.S."/>
        </authorList>
    </citation>
    <scope>NUCLEOTIDE SEQUENCE [LARGE SCALE GENOMIC DNA]</scope>
    <source>
        <strain>ATCC 23365 / NCTC 10854 / RM-666</strain>
    </source>
</reference>
<evidence type="ECO:0000255" key="1">
    <source>
        <dbReference type="HAMAP-Rule" id="MF_01207"/>
    </source>
</evidence>
<protein>
    <recommendedName>
        <fullName evidence="1">Protein-methionine-sulfoxide reductase heme-binding subunit MsrQ</fullName>
    </recommendedName>
    <alternativeName>
        <fullName evidence="1">Flavocytochrome MsrQ</fullName>
    </alternativeName>
</protein>
<accession>A9MCR7</accession>
<dbReference type="EMBL" id="CP000873">
    <property type="protein sequence ID" value="ABX64154.1"/>
    <property type="molecule type" value="Genomic_DNA"/>
</dbReference>
<dbReference type="RefSeq" id="WP_002965660.1">
    <property type="nucleotide sequence ID" value="NC_010104.1"/>
</dbReference>
<dbReference type="SMR" id="A9MCR7"/>
<dbReference type="GeneID" id="93015803"/>
<dbReference type="KEGG" id="bcs:BCAN_B1010"/>
<dbReference type="HOGENOM" id="CLU_080662_2_0_5"/>
<dbReference type="PhylomeDB" id="A9MCR7"/>
<dbReference type="Proteomes" id="UP000001385">
    <property type="component" value="Chromosome II"/>
</dbReference>
<dbReference type="GO" id="GO:0005886">
    <property type="term" value="C:plasma membrane"/>
    <property type="evidence" value="ECO:0007669"/>
    <property type="project" value="UniProtKB-SubCell"/>
</dbReference>
<dbReference type="GO" id="GO:0009055">
    <property type="term" value="F:electron transfer activity"/>
    <property type="evidence" value="ECO:0007669"/>
    <property type="project" value="UniProtKB-UniRule"/>
</dbReference>
<dbReference type="GO" id="GO:0010181">
    <property type="term" value="F:FMN binding"/>
    <property type="evidence" value="ECO:0007669"/>
    <property type="project" value="UniProtKB-UniRule"/>
</dbReference>
<dbReference type="GO" id="GO:0020037">
    <property type="term" value="F:heme binding"/>
    <property type="evidence" value="ECO:0007669"/>
    <property type="project" value="UniProtKB-UniRule"/>
</dbReference>
<dbReference type="GO" id="GO:0046872">
    <property type="term" value="F:metal ion binding"/>
    <property type="evidence" value="ECO:0007669"/>
    <property type="project" value="UniProtKB-KW"/>
</dbReference>
<dbReference type="GO" id="GO:0016679">
    <property type="term" value="F:oxidoreductase activity, acting on diphenols and related substances as donors"/>
    <property type="evidence" value="ECO:0007669"/>
    <property type="project" value="TreeGrafter"/>
</dbReference>
<dbReference type="GO" id="GO:0030091">
    <property type="term" value="P:protein repair"/>
    <property type="evidence" value="ECO:0007669"/>
    <property type="project" value="UniProtKB-UniRule"/>
</dbReference>
<dbReference type="HAMAP" id="MF_01207">
    <property type="entry name" value="MsrQ"/>
    <property type="match status" value="1"/>
</dbReference>
<dbReference type="InterPro" id="IPR013130">
    <property type="entry name" value="Fe3_Rdtase_TM_dom"/>
</dbReference>
<dbReference type="InterPro" id="IPR022837">
    <property type="entry name" value="MsrQ-like"/>
</dbReference>
<dbReference type="NCBIfam" id="NF003833">
    <property type="entry name" value="PRK05419.1-5"/>
    <property type="match status" value="1"/>
</dbReference>
<dbReference type="PANTHER" id="PTHR36964">
    <property type="entry name" value="PROTEIN-METHIONINE-SULFOXIDE REDUCTASE HEME-BINDING SUBUNIT MSRQ"/>
    <property type="match status" value="1"/>
</dbReference>
<dbReference type="PANTHER" id="PTHR36964:SF1">
    <property type="entry name" value="PROTEIN-METHIONINE-SULFOXIDE REDUCTASE HEME-BINDING SUBUNIT MSRQ"/>
    <property type="match status" value="1"/>
</dbReference>
<dbReference type="Pfam" id="PF01794">
    <property type="entry name" value="Ferric_reduct"/>
    <property type="match status" value="1"/>
</dbReference>
<organism>
    <name type="scientific">Brucella canis (strain ATCC 23365 / NCTC 10854 / RM-666)</name>
    <dbReference type="NCBI Taxonomy" id="483179"/>
    <lineage>
        <taxon>Bacteria</taxon>
        <taxon>Pseudomonadati</taxon>
        <taxon>Pseudomonadota</taxon>
        <taxon>Alphaproteobacteria</taxon>
        <taxon>Hyphomicrobiales</taxon>
        <taxon>Brucellaceae</taxon>
        <taxon>Brucella/Ochrobactrum group</taxon>
        <taxon>Brucella</taxon>
    </lineage>
</organism>
<name>MSRQ_BRUC2</name>
<keyword id="KW-0997">Cell inner membrane</keyword>
<keyword id="KW-1003">Cell membrane</keyword>
<keyword id="KW-0249">Electron transport</keyword>
<keyword id="KW-0285">Flavoprotein</keyword>
<keyword id="KW-0288">FMN</keyword>
<keyword id="KW-0349">Heme</keyword>
<keyword id="KW-0408">Iron</keyword>
<keyword id="KW-0472">Membrane</keyword>
<keyword id="KW-0479">Metal-binding</keyword>
<keyword id="KW-1185">Reference proteome</keyword>
<keyword id="KW-0812">Transmembrane</keyword>
<keyword id="KW-1133">Transmembrane helix</keyword>
<keyword id="KW-0813">Transport</keyword>
<feature type="chain" id="PRO_1000085523" description="Protein-methionine-sulfoxide reductase heme-binding subunit MsrQ">
    <location>
        <begin position="1"/>
        <end position="220"/>
    </location>
</feature>
<feature type="transmembrane region" description="Helical" evidence="1">
    <location>
        <begin position="20"/>
        <end position="40"/>
    </location>
</feature>
<feature type="transmembrane region" description="Helical" evidence="1">
    <location>
        <begin position="52"/>
        <end position="72"/>
    </location>
</feature>
<feature type="transmembrane region" description="Helical" evidence="1">
    <location>
        <begin position="86"/>
        <end position="106"/>
    </location>
</feature>
<feature type="transmembrane region" description="Helical" evidence="1">
    <location>
        <begin position="122"/>
        <end position="142"/>
    </location>
</feature>
<feature type="transmembrane region" description="Helical" evidence="1">
    <location>
        <begin position="153"/>
        <end position="173"/>
    </location>
</feature>
<feature type="transmembrane region" description="Helical" evidence="1">
    <location>
        <begin position="175"/>
        <end position="195"/>
    </location>
</feature>
<comment type="function">
    <text evidence="1">Part of the MsrPQ system that repairs oxidized periplasmic proteins containing methionine sulfoxide residues (Met-O), using respiratory chain electrons. Thus protects these proteins from oxidative-stress damage caused by reactive species of oxygen and chlorine generated by the host defense mechanisms. MsrPQ is essential for the maintenance of envelope integrity under bleach stress, rescuing a wide series of structurally unrelated periplasmic proteins from methionine oxidation. MsrQ provides electrons for reduction to the reductase catalytic subunit MsrP, using the quinone pool of the respiratory chain.</text>
</comment>
<comment type="cofactor">
    <cofactor evidence="1">
        <name>FMN</name>
        <dbReference type="ChEBI" id="CHEBI:58210"/>
    </cofactor>
    <text evidence="1">Binds 1 FMN per subunit.</text>
</comment>
<comment type="cofactor">
    <cofactor evidence="1">
        <name>heme b</name>
        <dbReference type="ChEBI" id="CHEBI:60344"/>
    </cofactor>
    <text evidence="1">Binds 1 heme b (iron(II)-protoporphyrin IX) group per subunit.</text>
</comment>
<comment type="subunit">
    <text evidence="1">Heterodimer of a catalytic subunit (MsrP) and a heme-binding subunit (MsrQ).</text>
</comment>
<comment type="subcellular location">
    <subcellularLocation>
        <location evidence="1">Cell inner membrane</location>
        <topology evidence="1">Multi-pass membrane protein</topology>
    </subcellularLocation>
</comment>
<comment type="similarity">
    <text evidence="1">Belongs to the MsrQ family.</text>
</comment>